<protein>
    <recommendedName>
        <fullName evidence="1">Methylthioribose-1-phosphate isomerase</fullName>
        <shortName evidence="1">M1Pi</shortName>
        <shortName evidence="1">MTR-1-P isomerase</shortName>
        <ecNumber evidence="1">5.3.1.23</ecNumber>
    </recommendedName>
    <alternativeName>
        <fullName evidence="1">S-methyl-5-thioribose-1-phosphate isomerase</fullName>
    </alternativeName>
</protein>
<name>MTNA_BACC1</name>
<keyword id="KW-0028">Amino-acid biosynthesis</keyword>
<keyword id="KW-0413">Isomerase</keyword>
<keyword id="KW-0486">Methionine biosynthesis</keyword>
<accession>Q731R7</accession>
<gene>
    <name evidence="1" type="primary">mtnA</name>
    <name type="ordered locus">BCE_4098</name>
</gene>
<comment type="function">
    <text evidence="1">Catalyzes the interconversion of methylthioribose-1-phosphate (MTR-1-P) into methylthioribulose-1-phosphate (MTRu-1-P).</text>
</comment>
<comment type="catalytic activity">
    <reaction evidence="1">
        <text>5-(methylsulfanyl)-alpha-D-ribose 1-phosphate = 5-(methylsulfanyl)-D-ribulose 1-phosphate</text>
        <dbReference type="Rhea" id="RHEA:19989"/>
        <dbReference type="ChEBI" id="CHEBI:58533"/>
        <dbReference type="ChEBI" id="CHEBI:58548"/>
        <dbReference type="EC" id="5.3.1.23"/>
    </reaction>
</comment>
<comment type="pathway">
    <text evidence="1">Amino-acid biosynthesis; L-methionine biosynthesis via salvage pathway; L-methionine from S-methyl-5-thio-alpha-D-ribose 1-phosphate: step 1/6.</text>
</comment>
<comment type="subunit">
    <text>Homodimer.</text>
</comment>
<comment type="similarity">
    <text evidence="2">Belongs to the eIF-2B alpha/beta/delta subunits family. MtnA subfamily.</text>
</comment>
<sequence length="351" mass="38570">MSTIVTIPRSVSWKGDAIAVLNQTKLPHSTEYKTLTTIEEVWKSIVMLEVRGAPAIGIVAAFGLALVAKKYTTLHIEEFQKKFNRDCNYLGTSRPTAVNLFWAIDRMRESIQEITTIKEAQKILEEEALLIQQEDEAVCRSIGEHALSCFQDGDNILTICNAGSIATAKYGTALAPFYIGKEKGVHLHAYACETRPVLQGGRLTTWELKQAGIDVTLITDNTAAHAIQTKEINAIIVGADRIVANGDTANKIGTMNLAILAKYFGIPFYVAAPLSTFDITKQTGAEIVIEERDETEVTKIFGKQVTPVGTTVYNPAFDVTPNELITGIITERGIIRGDYKREIASLFEKTS</sequence>
<reference key="1">
    <citation type="journal article" date="2004" name="Nucleic Acids Res.">
        <title>The genome sequence of Bacillus cereus ATCC 10987 reveals metabolic adaptations and a large plasmid related to Bacillus anthracis pXO1.</title>
        <authorList>
            <person name="Rasko D.A."/>
            <person name="Ravel J."/>
            <person name="Oekstad O.A."/>
            <person name="Helgason E."/>
            <person name="Cer R.Z."/>
            <person name="Jiang L."/>
            <person name="Shores K.A."/>
            <person name="Fouts D.E."/>
            <person name="Tourasse N.J."/>
            <person name="Angiuoli S.V."/>
            <person name="Kolonay J.F."/>
            <person name="Nelson W.C."/>
            <person name="Kolstoe A.-B."/>
            <person name="Fraser C.M."/>
            <person name="Read T.D."/>
        </authorList>
    </citation>
    <scope>NUCLEOTIDE SEQUENCE [LARGE SCALE GENOMIC DNA]</scope>
    <source>
        <strain>ATCC 10987 / NRS 248</strain>
    </source>
</reference>
<organism>
    <name type="scientific">Bacillus cereus (strain ATCC 10987 / NRS 248)</name>
    <dbReference type="NCBI Taxonomy" id="222523"/>
    <lineage>
        <taxon>Bacteria</taxon>
        <taxon>Bacillati</taxon>
        <taxon>Bacillota</taxon>
        <taxon>Bacilli</taxon>
        <taxon>Bacillales</taxon>
        <taxon>Bacillaceae</taxon>
        <taxon>Bacillus</taxon>
        <taxon>Bacillus cereus group</taxon>
    </lineage>
</organism>
<proteinExistence type="inferred from homology"/>
<evidence type="ECO:0000255" key="1">
    <source>
        <dbReference type="HAMAP-Rule" id="MF_01678"/>
    </source>
</evidence>
<evidence type="ECO:0000305" key="2"/>
<feature type="chain" id="PRO_0000357143" description="Methylthioribose-1-phosphate isomerase">
    <location>
        <begin position="1"/>
        <end position="351"/>
    </location>
</feature>
<feature type="active site" description="Proton donor" evidence="1">
    <location>
        <position position="240"/>
    </location>
</feature>
<feature type="binding site" evidence="1">
    <location>
        <begin position="51"/>
        <end position="53"/>
    </location>
    <ligand>
        <name>substrate</name>
    </ligand>
</feature>
<feature type="binding site" evidence="1">
    <location>
        <position position="94"/>
    </location>
    <ligand>
        <name>substrate</name>
    </ligand>
</feature>
<feature type="binding site" evidence="1">
    <location>
        <position position="199"/>
    </location>
    <ligand>
        <name>substrate</name>
    </ligand>
</feature>
<feature type="binding site" evidence="1">
    <location>
        <begin position="250"/>
        <end position="251"/>
    </location>
    <ligand>
        <name>substrate</name>
    </ligand>
</feature>
<feature type="site" description="Transition state stabilizer" evidence="1">
    <location>
        <position position="160"/>
    </location>
</feature>
<dbReference type="EC" id="5.3.1.23" evidence="1"/>
<dbReference type="EMBL" id="AE017194">
    <property type="protein sequence ID" value="AAS43000.1"/>
    <property type="molecule type" value="Genomic_DNA"/>
</dbReference>
<dbReference type="SMR" id="Q731R7"/>
<dbReference type="KEGG" id="bca:BCE_4098"/>
<dbReference type="HOGENOM" id="CLU_016218_1_2_9"/>
<dbReference type="UniPathway" id="UPA00904">
    <property type="reaction ID" value="UER00874"/>
</dbReference>
<dbReference type="Proteomes" id="UP000002527">
    <property type="component" value="Chromosome"/>
</dbReference>
<dbReference type="GO" id="GO:0046523">
    <property type="term" value="F:S-methyl-5-thioribose-1-phosphate isomerase activity"/>
    <property type="evidence" value="ECO:0007669"/>
    <property type="project" value="UniProtKB-UniRule"/>
</dbReference>
<dbReference type="GO" id="GO:0019509">
    <property type="term" value="P:L-methionine salvage from methylthioadenosine"/>
    <property type="evidence" value="ECO:0007669"/>
    <property type="project" value="UniProtKB-UniRule"/>
</dbReference>
<dbReference type="FunFam" id="1.20.120.420:FF:000005">
    <property type="entry name" value="Methylthioribose-1-phosphate isomerase"/>
    <property type="match status" value="1"/>
</dbReference>
<dbReference type="FunFam" id="3.40.50.10470:FF:000006">
    <property type="entry name" value="Methylthioribose-1-phosphate isomerase"/>
    <property type="match status" value="1"/>
</dbReference>
<dbReference type="Gene3D" id="1.20.120.420">
    <property type="entry name" value="translation initiation factor eif-2b, domain 1"/>
    <property type="match status" value="1"/>
</dbReference>
<dbReference type="Gene3D" id="3.40.50.10470">
    <property type="entry name" value="Translation initiation factor eif-2b, domain 2"/>
    <property type="match status" value="1"/>
</dbReference>
<dbReference type="HAMAP" id="MF_01678">
    <property type="entry name" value="Salvage_MtnA"/>
    <property type="match status" value="1"/>
</dbReference>
<dbReference type="InterPro" id="IPR000649">
    <property type="entry name" value="IF-2B-related"/>
</dbReference>
<dbReference type="InterPro" id="IPR005251">
    <property type="entry name" value="IF-M1Pi"/>
</dbReference>
<dbReference type="InterPro" id="IPR042529">
    <property type="entry name" value="IF_2B-like_C"/>
</dbReference>
<dbReference type="InterPro" id="IPR011559">
    <property type="entry name" value="Initiation_fac_2B_a/b/d"/>
</dbReference>
<dbReference type="InterPro" id="IPR027363">
    <property type="entry name" value="M1Pi_N"/>
</dbReference>
<dbReference type="InterPro" id="IPR037171">
    <property type="entry name" value="NagB/RpiA_transferase-like"/>
</dbReference>
<dbReference type="NCBIfam" id="TIGR00524">
    <property type="entry name" value="eIF-2B_rel"/>
    <property type="match status" value="1"/>
</dbReference>
<dbReference type="NCBIfam" id="NF004326">
    <property type="entry name" value="PRK05720.1"/>
    <property type="match status" value="1"/>
</dbReference>
<dbReference type="NCBIfam" id="TIGR00512">
    <property type="entry name" value="salvage_mtnA"/>
    <property type="match status" value="1"/>
</dbReference>
<dbReference type="PANTHER" id="PTHR43475">
    <property type="entry name" value="METHYLTHIORIBOSE-1-PHOSPHATE ISOMERASE"/>
    <property type="match status" value="1"/>
</dbReference>
<dbReference type="PANTHER" id="PTHR43475:SF4">
    <property type="entry name" value="METHYLTHIORIBOSE-1-PHOSPHATE ISOMERASE"/>
    <property type="match status" value="1"/>
</dbReference>
<dbReference type="Pfam" id="PF01008">
    <property type="entry name" value="IF-2B"/>
    <property type="match status" value="1"/>
</dbReference>
<dbReference type="SUPFAM" id="SSF100950">
    <property type="entry name" value="NagB/RpiA/CoA transferase-like"/>
    <property type="match status" value="1"/>
</dbReference>